<evidence type="ECO:0000250" key="1">
    <source>
        <dbReference type="UniProtKB" id="P07492"/>
    </source>
</evidence>
<evidence type="ECO:0000250" key="2">
    <source>
        <dbReference type="UniProtKB" id="P63153"/>
    </source>
</evidence>
<evidence type="ECO:0000250" key="3">
    <source>
        <dbReference type="UniProtKB" id="Q863C3"/>
    </source>
</evidence>
<evidence type="ECO:0000269" key="4">
    <source>
    </source>
</evidence>
<evidence type="ECO:0000305" key="5"/>
<reference key="1">
    <citation type="journal article" date="1992" name="J. Biol. Chem.">
        <title>Gastrin-releasing peptide (GRP) is not mammalian bombesin. Identification and molecular cloning of a true amphibian GRP distinct from amphibian bombesin in Bombina orientalis.</title>
        <authorList>
            <person name="Nagalla S.R."/>
            <person name="Gibson B.W."/>
            <person name="Tang D."/>
            <person name="Reeve J.R. Jr."/>
            <person name="Spindel E.R."/>
        </authorList>
    </citation>
    <scope>NUCLEOTIDE SEQUENCE [MRNA]</scope>
    <scope>PROTEIN SEQUENCE OF 51-60</scope>
    <scope>AMIDATION AT MET-60</scope>
    <scope>IDENTIFICATION BY MASS SPECTROMETRY</scope>
    <scope>IDENTIFICATION OF GASTRIN-RELEASING PEPTIDE</scope>
    <source>
        <tissue>Intestine</tissue>
    </source>
</reference>
<protein>
    <recommendedName>
        <fullName>Gastrin-releasing peptide</fullName>
        <shortName>GRP-29</shortName>
    </recommendedName>
    <component>
        <recommendedName>
            <fullName>Neuromedin-C</fullName>
        </recommendedName>
        <alternativeName>
            <fullName>GRP-10</fullName>
        </alternativeName>
    </component>
    <component>
        <recommendedName>
            <fullName>C-terminal extension peptide</fullName>
            <shortName>CTEP</shortName>
        </recommendedName>
    </component>
</protein>
<accession>P29007</accession>
<dbReference type="EMBL" id="M83737">
    <property type="protein sequence ID" value="AAA51409.1"/>
    <property type="molecule type" value="mRNA"/>
</dbReference>
<dbReference type="PIR" id="A42437">
    <property type="entry name" value="A42437"/>
</dbReference>
<dbReference type="GO" id="GO:0005615">
    <property type="term" value="C:extracellular space"/>
    <property type="evidence" value="ECO:0000250"/>
    <property type="project" value="UniProtKB"/>
</dbReference>
<dbReference type="GO" id="GO:0034774">
    <property type="term" value="C:secretory granule lumen"/>
    <property type="evidence" value="ECO:0000250"/>
    <property type="project" value="UniProtKB"/>
</dbReference>
<dbReference type="GO" id="GO:0005184">
    <property type="term" value="F:neuropeptide hormone activity"/>
    <property type="evidence" value="ECO:0007669"/>
    <property type="project" value="TreeGrafter"/>
</dbReference>
<dbReference type="GO" id="GO:0007218">
    <property type="term" value="P:neuropeptide signaling pathway"/>
    <property type="evidence" value="ECO:0007669"/>
    <property type="project" value="InterPro"/>
</dbReference>
<dbReference type="GO" id="GO:0090277">
    <property type="term" value="P:positive regulation of peptide hormone secretion"/>
    <property type="evidence" value="ECO:0000250"/>
    <property type="project" value="UniProtKB"/>
</dbReference>
<dbReference type="GO" id="GO:1900738">
    <property type="term" value="P:positive regulation of phospholipase C-activating G protein-coupled receptor signaling pathway"/>
    <property type="evidence" value="ECO:0000250"/>
    <property type="project" value="UniProtKB"/>
</dbReference>
<dbReference type="InterPro" id="IPR000874">
    <property type="entry name" value="Bombesin"/>
</dbReference>
<dbReference type="PANTHER" id="PTHR16866">
    <property type="entry name" value="GASTRIN-RELEASING PEPTIDE"/>
    <property type="match status" value="1"/>
</dbReference>
<dbReference type="PANTHER" id="PTHR16866:SF2">
    <property type="entry name" value="GASTRIN-RELEASING PEPTIDE"/>
    <property type="match status" value="1"/>
</dbReference>
<dbReference type="Pfam" id="PF02044">
    <property type="entry name" value="Bombesin"/>
    <property type="match status" value="1"/>
</dbReference>
<dbReference type="PROSITE" id="PS00257">
    <property type="entry name" value="BOMBESIN"/>
    <property type="match status" value="1"/>
</dbReference>
<name>GRP_BOMOR</name>
<gene>
    <name type="primary">grp</name>
</gene>
<keyword id="KW-0027">Amidation</keyword>
<keyword id="KW-0165">Cleavage on pair of basic residues</keyword>
<keyword id="KW-0968">Cytoplasmic vesicle</keyword>
<keyword id="KW-0903">Direct protein sequencing</keyword>
<keyword id="KW-0964">Secreted</keyword>
<keyword id="KW-0732">Signal</keyword>
<comment type="function">
    <text evidence="2">Stimulates the release of gastrin and other gastrointestinal hormones.</text>
</comment>
<comment type="subcellular location">
    <subcellularLocation>
        <location evidence="1">Secreted</location>
    </subcellularLocation>
    <subcellularLocation>
        <location evidence="3">Cytoplasmic vesicle</location>
        <location evidence="3">Secretory vesicle lumen</location>
    </subcellularLocation>
</comment>
<comment type="tissue specificity">
    <text>Brain and stomach. In the stomach GRP was localized, at the base of the gastric pits, to occasional cells whose distribution and appearance were consistent with that of gut neuroendocrine cells.</text>
</comment>
<comment type="similarity">
    <text evidence="5">Belongs to the bombesin/neuromedin-B/ranatensin family.</text>
</comment>
<feature type="signal peptide" evidence="4">
    <location>
        <begin position="1"/>
        <end position="31"/>
    </location>
</feature>
<feature type="peptide" id="PRO_0000003047" description="Gastrin-releasing peptide" evidence="4">
    <location>
        <begin position="32"/>
        <end position="60"/>
    </location>
</feature>
<feature type="peptide" id="PRO_0000003048" description="Neuromedin-C" evidence="4">
    <location>
        <begin position="51"/>
        <end position="60"/>
    </location>
</feature>
<feature type="peptide" id="PRO_0000003049" description="C-terminal extension peptide" evidence="4">
    <location>
        <begin position="64"/>
        <end position="125"/>
    </location>
</feature>
<feature type="propeptide" id="PRO_0000003050">
    <location>
        <begin position="128"/>
        <end position="155"/>
    </location>
</feature>
<feature type="modified residue" description="Methionine amide" evidence="4">
    <location>
        <position position="60"/>
    </location>
</feature>
<sequence>MEGVLLFWKYRALFFLVLCSLVLCKVHLSQASPTSQQHNDAASLSKIYPRGSHWAVGHLMGKKSIEEYPYAYDEADRSSAAVFSEGDKPSDGYQQWKESLLNLLKMIEVNEYRNSKAMREASVYNKKFSGAEDNNLKEMLDYLYQMMNMKENTSS</sequence>
<proteinExistence type="evidence at protein level"/>
<organism>
    <name type="scientific">Bombina orientalis</name>
    <name type="common">Oriental fire-bellied toad</name>
    <dbReference type="NCBI Taxonomy" id="8346"/>
    <lineage>
        <taxon>Eukaryota</taxon>
        <taxon>Metazoa</taxon>
        <taxon>Chordata</taxon>
        <taxon>Craniata</taxon>
        <taxon>Vertebrata</taxon>
        <taxon>Euteleostomi</taxon>
        <taxon>Amphibia</taxon>
        <taxon>Batrachia</taxon>
        <taxon>Anura</taxon>
        <taxon>Bombinatoridae</taxon>
        <taxon>Bombina</taxon>
    </lineage>
</organism>